<accession>O54772</accession>
<accession>O54771</accession>
<proteinExistence type="evidence at protein level"/>
<dbReference type="EMBL" id="AB003504">
    <property type="protein sequence ID" value="BAA24105.1"/>
    <property type="status" value="ALT_INIT"/>
    <property type="molecule type" value="mRNA"/>
</dbReference>
<dbReference type="EMBL" id="AB003505">
    <property type="protein sequence ID" value="BAA24106.1"/>
    <property type="molecule type" value="Genomic_DNA"/>
</dbReference>
<dbReference type="EMBL" id="BC062063">
    <property type="protein sequence ID" value="AAH62063.1"/>
    <property type="molecule type" value="mRNA"/>
</dbReference>
<dbReference type="PIR" id="JC6508">
    <property type="entry name" value="JC6508"/>
</dbReference>
<dbReference type="RefSeq" id="NP_114189.1">
    <property type="nucleotide sequence ID" value="NM_031983.2"/>
</dbReference>
<dbReference type="SMR" id="O54772"/>
<dbReference type="BioGRID" id="249859">
    <property type="interactions" value="1"/>
</dbReference>
<dbReference type="FunCoup" id="O54772">
    <property type="interactions" value="1807"/>
</dbReference>
<dbReference type="STRING" id="10116.ENSRNOP00000014508"/>
<dbReference type="GlyGen" id="O54772">
    <property type="glycosylation" value="2 sites"/>
</dbReference>
<dbReference type="iPTMnet" id="O54772"/>
<dbReference type="PhosphoSitePlus" id="O54772"/>
<dbReference type="jPOST" id="O54772"/>
<dbReference type="PaxDb" id="10116-ENSRNOP00000014508"/>
<dbReference type="GeneID" id="83833"/>
<dbReference type="KEGG" id="rno:83833"/>
<dbReference type="AGR" id="RGD:69289"/>
<dbReference type="CTD" id="6603"/>
<dbReference type="RGD" id="69289">
    <property type="gene designation" value="Smarcd2"/>
</dbReference>
<dbReference type="VEuPathDB" id="HostDB:ENSRNOG00000010557"/>
<dbReference type="eggNOG" id="KOG2570">
    <property type="taxonomic scope" value="Eukaryota"/>
</dbReference>
<dbReference type="HOGENOM" id="CLU_023529_0_2_1"/>
<dbReference type="InParanoid" id="O54772"/>
<dbReference type="PhylomeDB" id="O54772"/>
<dbReference type="TreeFam" id="TF106486"/>
<dbReference type="Reactome" id="R-RNO-3214858">
    <property type="pathway name" value="RMTs methylate histone arginines"/>
</dbReference>
<dbReference type="Reactome" id="R-RNO-8939243">
    <property type="pathway name" value="RUNX1 interacts with co-factors whose precise effect on RUNX1 targets is not known"/>
</dbReference>
<dbReference type="PRO" id="PR:O54772"/>
<dbReference type="Proteomes" id="UP000002494">
    <property type="component" value="Chromosome 10"/>
</dbReference>
<dbReference type="Bgee" id="ENSRNOG00000010557">
    <property type="expression patterns" value="Expressed in thymus and 20 other cell types or tissues"/>
</dbReference>
<dbReference type="GO" id="GO:0005654">
    <property type="term" value="C:nucleoplasm"/>
    <property type="evidence" value="ECO:0007669"/>
    <property type="project" value="UniProtKB-ARBA"/>
</dbReference>
<dbReference type="GO" id="GO:0005634">
    <property type="term" value="C:nucleus"/>
    <property type="evidence" value="ECO:0000318"/>
    <property type="project" value="GO_Central"/>
</dbReference>
<dbReference type="GO" id="GO:0016514">
    <property type="term" value="C:SWI/SNF complex"/>
    <property type="evidence" value="ECO:0000266"/>
    <property type="project" value="RGD"/>
</dbReference>
<dbReference type="GO" id="GO:0003712">
    <property type="term" value="F:transcription coregulator activity"/>
    <property type="evidence" value="ECO:0000318"/>
    <property type="project" value="GO_Central"/>
</dbReference>
<dbReference type="GO" id="GO:0006338">
    <property type="term" value="P:chromatin remodeling"/>
    <property type="evidence" value="ECO:0000266"/>
    <property type="project" value="RGD"/>
</dbReference>
<dbReference type="GO" id="GO:0006337">
    <property type="term" value="P:nucleosome disassembly"/>
    <property type="evidence" value="ECO:0000266"/>
    <property type="project" value="RGD"/>
</dbReference>
<dbReference type="GO" id="GO:0006357">
    <property type="term" value="P:regulation of transcription by RNA polymerase II"/>
    <property type="evidence" value="ECO:0000318"/>
    <property type="project" value="GO_Central"/>
</dbReference>
<dbReference type="CDD" id="cd17675">
    <property type="entry name" value="SWIB_BAF60B"/>
    <property type="match status" value="1"/>
</dbReference>
<dbReference type="FunFam" id="1.10.245.10:FF:000001">
    <property type="entry name" value="SWI/SNF-related matrix-associated regulator of chromatin subfamily D member 3 isoform 1"/>
    <property type="match status" value="1"/>
</dbReference>
<dbReference type="Gene3D" id="1.10.245.10">
    <property type="entry name" value="SWIB/MDM2 domain"/>
    <property type="match status" value="1"/>
</dbReference>
<dbReference type="InterPro" id="IPR030090">
    <property type="entry name" value="SMARCD2_SWIB_dom"/>
</dbReference>
<dbReference type="InterPro" id="IPR019835">
    <property type="entry name" value="SWIB_domain"/>
</dbReference>
<dbReference type="InterPro" id="IPR036885">
    <property type="entry name" value="SWIB_MDM2_dom_sf"/>
</dbReference>
<dbReference type="InterPro" id="IPR003121">
    <property type="entry name" value="SWIB_MDM2_domain"/>
</dbReference>
<dbReference type="PANTHER" id="PTHR13844">
    <property type="entry name" value="SWI/SNF-RELATED MATRIX-ASSOCIATED ACTIN-DEPENDENT REGULATOR OF CHROMATIN SUBFAMILY D"/>
    <property type="match status" value="1"/>
</dbReference>
<dbReference type="Pfam" id="PF02201">
    <property type="entry name" value="SWIB"/>
    <property type="match status" value="1"/>
</dbReference>
<dbReference type="SMART" id="SM00151">
    <property type="entry name" value="SWIB"/>
    <property type="match status" value="1"/>
</dbReference>
<dbReference type="SUPFAM" id="SSF47592">
    <property type="entry name" value="SWIB/MDM2 domain"/>
    <property type="match status" value="1"/>
</dbReference>
<dbReference type="PROSITE" id="PS51925">
    <property type="entry name" value="SWIB_MDM2"/>
    <property type="match status" value="1"/>
</dbReference>
<evidence type="ECO:0000250" key="1">
    <source>
        <dbReference type="UniProtKB" id="Q92925"/>
    </source>
</evidence>
<evidence type="ECO:0000255" key="2">
    <source>
        <dbReference type="PROSITE-ProRule" id="PRU01273"/>
    </source>
</evidence>
<evidence type="ECO:0000256" key="3">
    <source>
        <dbReference type="SAM" id="MobiDB-lite"/>
    </source>
</evidence>
<evidence type="ECO:0000305" key="4"/>
<reference key="1">
    <citation type="journal article" date="1997" name="Gene">
        <title>Gene structure of rat BAF60b, a component of mammalian SWI/SNF complexes, and its physical linkage to the growth hormone gene and transcription factor SUG/proteasome p45 gene.</title>
        <authorList>
            <person name="Nomoto K."/>
            <person name="Nakazato S."/>
            <person name="Kazahari K."/>
            <person name="Ono M."/>
        </authorList>
    </citation>
    <scope>NUCLEOTIDE SEQUENCE [GENOMIC DNA / MRNA]</scope>
    <source>
        <strain>Wistar</strain>
        <tissue>Brain</tissue>
        <tissue>Liver</tissue>
    </source>
</reference>
<reference key="2">
    <citation type="journal article" date="2004" name="Genome Res.">
        <title>The status, quality, and expansion of the NIH full-length cDNA project: the Mammalian Gene Collection (MGC).</title>
        <authorList>
            <consortium name="The MGC Project Team"/>
        </authorList>
    </citation>
    <scope>NUCLEOTIDE SEQUENCE [LARGE SCALE MRNA] OF 63-531</scope>
    <source>
        <tissue>Prostate</tissue>
    </source>
</reference>
<reference key="3">
    <citation type="journal article" date="2012" name="Nat. Commun.">
        <title>Quantitative maps of protein phosphorylation sites across 14 different rat organs and tissues.</title>
        <authorList>
            <person name="Lundby A."/>
            <person name="Secher A."/>
            <person name="Lage K."/>
            <person name="Nordsborg N.B."/>
            <person name="Dmytriyev A."/>
            <person name="Lundby C."/>
            <person name="Olsen J.V."/>
        </authorList>
    </citation>
    <scope>IDENTIFICATION BY MASS SPECTROMETRY [LARGE SCALE ANALYSIS]</scope>
</reference>
<gene>
    <name type="primary">Smarcd2</name>
    <name type="synonym">Baf60b</name>
</gene>
<feature type="chain" id="PRO_0000071987" description="SWI/SNF-related matrix-associated actin-dependent regulator of chromatin subfamily D member 2">
    <location>
        <begin position="1"/>
        <end position="531"/>
    </location>
</feature>
<feature type="domain" description="SWIB/MDM2" evidence="2">
    <location>
        <begin position="306"/>
        <end position="383"/>
    </location>
</feature>
<feature type="region of interest" description="Disordered" evidence="3">
    <location>
        <begin position="20"/>
        <end position="85"/>
    </location>
</feature>
<feature type="region of interest" description="Disordered" evidence="3">
    <location>
        <begin position="202"/>
        <end position="226"/>
    </location>
</feature>
<feature type="compositionally biased region" description="Low complexity" evidence="3">
    <location>
        <begin position="34"/>
        <end position="45"/>
    </location>
</feature>
<feature type="modified residue" description="Asymmetric dimethylarginine" evidence="1">
    <location>
        <position position="81"/>
    </location>
</feature>
<feature type="modified residue" description="Asymmetric dimethylarginine" evidence="1">
    <location>
        <position position="104"/>
    </location>
</feature>
<feature type="modified residue" description="Phosphoserine" evidence="1">
    <location>
        <position position="203"/>
    </location>
</feature>
<feature type="modified residue" description="Phosphothreonine" evidence="1">
    <location>
        <position position="217"/>
    </location>
</feature>
<feature type="cross-link" description="Glycyl lysine isopeptide (Lys-Gly) (interchain with G-Cter in SUMO2)" evidence="1">
    <location>
        <position position="226"/>
    </location>
</feature>
<feature type="sequence conflict" description="In Ref. 1; BAA24105." evidence="4" ref="1">
    <original>G</original>
    <variation>A</variation>
    <location>
        <position position="66"/>
    </location>
</feature>
<organism>
    <name type="scientific">Rattus norvegicus</name>
    <name type="common">Rat</name>
    <dbReference type="NCBI Taxonomy" id="10116"/>
    <lineage>
        <taxon>Eukaryota</taxon>
        <taxon>Metazoa</taxon>
        <taxon>Chordata</taxon>
        <taxon>Craniata</taxon>
        <taxon>Vertebrata</taxon>
        <taxon>Euteleostomi</taxon>
        <taxon>Mammalia</taxon>
        <taxon>Eutheria</taxon>
        <taxon>Euarchontoglires</taxon>
        <taxon>Glires</taxon>
        <taxon>Rodentia</taxon>
        <taxon>Myomorpha</taxon>
        <taxon>Muroidea</taxon>
        <taxon>Muridae</taxon>
        <taxon>Murinae</taxon>
        <taxon>Rattus</taxon>
    </lineage>
</organism>
<comment type="function">
    <text evidence="1">Involved in transcriptional activation and repression of select genes by chromatin remodeling (alteration of DNA-nucleosome topology). Component of SWI/SNF chromatin remodeling complexes that carry out key enzymatic activities, changing chromatin structure by altering DNA-histone contacts within a nucleosome in an ATP-dependent manner. Critical regulator of myeloid differentiation, controlling granulocytopoiesis and the expression of genes involved in neutrophil granule formation.</text>
</comment>
<comment type="subunit">
    <text evidence="1">Component of the multiprotein chromatin-remodeling complexes SWI/SNF: SWI/SNF-A (BAF), SWI/SNF-B (PBAF) and related complexes. The canonical complex contains a catalytic subunit (either SMARCA4/BRG1/BAF190A or SMARCA2/BRM/BAF190B), and at least SMARCE1, ACTL6A/BAF53, SMARCC1/BAF155, SMARCC2/BAF170, and SMARCB1/SNF5/BAF47. Other subunits specific to each of the complexes may also be present permitting several possible combinations developmentally and tissue specific. Component of the BAF complex, which includes at least actin (ACTB), ARID1A/BAF250A, ARID1B/BAF250B, SMARCA2/BRM, SMARCA4/BRG1, ACTL6A/BAF53, ACTL6B/BAF53B, SMARCE1/BAF57, SMARCC1/BAF155, SMARCC2/BAF170, SMARCB1/SNF5/INI1, and one or more SMARCD1/BAF60A, SMARCD2/BAF60B, or SMARCD3/BAF60C. In muscle cells, the BAF complex also contains DPF3. Component of the SWI/SNF-B (PBAF) chromatin remodeling complex, at least composed of SMARCA4/BRG1, SMARCB1/BAF47/SNF5, ACTL6A/BAF53A or ACTL6B/BAF53B, SMARCE1/BAF57, SMARCD1/BAF60A, SMARCD2/BAF60B, perhaps SMARCD3/BAF60C, SMARCC1/BAF155, SMARCC2/BAF170, PBRM1/BAF180, ARID2/BAF200 and actin (ACTB). Interacts with UNKL. Interacts with CEBPE.</text>
</comment>
<comment type="subcellular location">
    <subcellularLocation>
        <location evidence="1">Nucleus</location>
    </subcellularLocation>
</comment>
<comment type="PTM">
    <text evidence="1">Ubiquitinated through a signaling process involving RAC1 and the RING finger protein UNKL.</text>
</comment>
<comment type="similarity">
    <text evidence="4">Belongs to the SMARCD family.</text>
</comment>
<comment type="sequence caution" evidence="4">
    <conflict type="erroneous initiation">
        <sequence resource="EMBL-CDS" id="BAA24105"/>
    </conflict>
    <text>Truncated N-terminus.</text>
</comment>
<name>SMRD2_RAT</name>
<sequence>MSGRGAGGFPLPPLSPGGGAVAAALGAPPPPAGPGMLPNPALRGPGPSGGMGVPGAAAFRPMGPAGPAAQYQRPGMSPGSRMPMAGLQVGPPAGSPFGTAAPLRPGMPPTMMDPFRKRLLVPQAQPPMPAQRRGLKRRKMADKVLPQRIRELVPESQAYMDLLAFERKLDQTIARKRMEIQEAIKKPLTQKRKLRIYISNTFSPSKADGDNSGTAGTPGGTPAADKVASWELRVEGKLLDDPSKQKRKFSSFFKSLVIELDKELYGPDNHLVEWHRMPTTQETDGFQVKRPGDLNVKCTLLLMLDHQPPQYKLDPRLARLLGVHTQTRAAIMQALWLYIKHNQLQDGHEREYINCNRYFRQIFSCGRLRFSEIPMKLAGLLQHPDPIVINHVISVDPNDQKKTACYDIDVEVDDPLKAQMSNFLASTTNQQEIASLDVKIHETIESINQLKTQRDFMLSFSTEPQDFIQEWLRSQRRDLKIITDVIGNPEEERRAAFYHQPWAQEAVGRHIFAKVQQRRQELEQVLGIRLT</sequence>
<keyword id="KW-0156">Chromatin regulator</keyword>
<keyword id="KW-1017">Isopeptide bond</keyword>
<keyword id="KW-0488">Methylation</keyword>
<keyword id="KW-0539">Nucleus</keyword>
<keyword id="KW-0597">Phosphoprotein</keyword>
<keyword id="KW-1185">Reference proteome</keyword>
<keyword id="KW-0804">Transcription</keyword>
<keyword id="KW-0805">Transcription regulation</keyword>
<keyword id="KW-0832">Ubl conjugation</keyword>
<protein>
    <recommendedName>
        <fullName>SWI/SNF-related matrix-associated actin-dependent regulator of chromatin subfamily D member 2</fullName>
    </recommendedName>
    <alternativeName>
        <fullName>60 kDa BRG-1/Brm-associated factor subunit B</fullName>
    </alternativeName>
    <alternativeName>
        <fullName>BRG1-associated factor 60B</fullName>
        <shortName>BAF60B</shortName>
    </alternativeName>
</protein>